<sequence>MTRRVAVTGIGVVAPGGIGVPAFWDLLSSGRTATRGITLFDPEGLRSRIAAECDFDPLAHGLDPELVERADRYIQFALVAADEAVTDSGIDFGTENPWRVAVSLGSAVGGTTRLEHDYVLVSERGQRWDVDHRAAEPELHRAFSPSTLAADVAERFGAQGPVQTVSTGCTSGLDAVGYAFHTIEEGRADVCIAGASDSPISPITMACFDAIKATSPNNDDPEHASRPFDAHRDGFVMGEGAAVLVLEELEHARARGAHVYCEIGGYATFGNAYHMTGLTSEGLEMARAIDVALDHARVDPTDIDYVNAHGSGTRQNDRHETAAVKKSLGAHAYDTPMSSIKSMVGHSLGAIGAIEVVACVLALARQVVPPTANYETPDPECDLDYVPRTARPRRLDHVLSVGSGFGGFQSAVLLTGPAGRKR</sequence>
<evidence type="ECO:0000255" key="1">
    <source>
        <dbReference type="PROSITE-ProRule" id="PRU01348"/>
    </source>
</evidence>
<evidence type="ECO:0000305" key="2"/>
<name>KAS1_STRCN</name>
<proteinExistence type="inferred from homology"/>
<organism>
    <name type="scientific">Streptomyces cyaneus</name>
    <name type="common">Streptomyces curacoi</name>
    <dbReference type="NCBI Taxonomy" id="1904"/>
    <lineage>
        <taxon>Bacteria</taxon>
        <taxon>Bacillati</taxon>
        <taxon>Actinomycetota</taxon>
        <taxon>Actinomycetes</taxon>
        <taxon>Kitasatosporales</taxon>
        <taxon>Streptomycetaceae</taxon>
        <taxon>Streptomyces</taxon>
    </lineage>
</organism>
<reference key="1">
    <citation type="journal article" date="1992" name="Gene">
        <title>Analysis of a polyketide synthesis-encoding gene cluster of Streptomyces curacoi.</title>
        <authorList>
            <person name="Bergh S."/>
            <person name="Uhlen M."/>
        </authorList>
    </citation>
    <scope>NUCLEOTIDE SEQUENCE [GENOMIC DNA]</scope>
    <source>
        <strain>ATCC 13385 / CBS 484.68 / DSM 40107 / JCM 4219 / NBRC 12761 / NRRL B-2901 / VKM Ac-621</strain>
    </source>
</reference>
<gene>
    <name type="primary">curA</name>
</gene>
<feature type="chain" id="PRO_0000180336" description="Putative polyketide beta-ketoacyl synthase 1">
    <location>
        <begin position="1"/>
        <end position="422"/>
    </location>
</feature>
<feature type="domain" description="Ketosynthase family 3 (KS3)" evidence="1">
    <location>
        <begin position="2"/>
        <end position="416"/>
    </location>
</feature>
<feature type="active site" description="For beta-ketoacyl synthase activity" evidence="1">
    <location>
        <position position="169"/>
    </location>
</feature>
<feature type="active site" description="For beta-ketoacyl synthase activity" evidence="1">
    <location>
        <position position="309"/>
    </location>
</feature>
<feature type="active site" description="For beta-ketoacyl synthase activity" evidence="1">
    <location>
        <position position="346"/>
    </location>
</feature>
<protein>
    <recommendedName>
        <fullName>Putative polyketide beta-ketoacyl synthase 1</fullName>
        <ecNumber>2.3.1.-</ecNumber>
    </recommendedName>
</protein>
<keyword id="KW-0012">Acyltransferase</keyword>
<keyword id="KW-0045">Antibiotic biosynthesis</keyword>
<keyword id="KW-0808">Transferase</keyword>
<comment type="pathway">
    <text>Antibiotic biosynthesis; curamycin biosynthesis.</text>
</comment>
<comment type="similarity">
    <text evidence="2">Belongs to the thiolase-like superfamily. Beta-ketoacyl-ACP synthases family.</text>
</comment>
<accession>Q02578</accession>
<dbReference type="EC" id="2.3.1.-"/>
<dbReference type="EMBL" id="X62518">
    <property type="protein sequence ID" value="CAA44380.1"/>
    <property type="molecule type" value="Genomic_DNA"/>
</dbReference>
<dbReference type="EMBL" id="M33704">
    <property type="protein sequence ID" value="AAA26726.1"/>
    <property type="molecule type" value="Genomic_DNA"/>
</dbReference>
<dbReference type="PIR" id="JC1210">
    <property type="entry name" value="JC1210"/>
</dbReference>
<dbReference type="SMR" id="Q02578"/>
<dbReference type="UniPathway" id="UPA00176"/>
<dbReference type="GO" id="GO:0005829">
    <property type="term" value="C:cytosol"/>
    <property type="evidence" value="ECO:0007669"/>
    <property type="project" value="TreeGrafter"/>
</dbReference>
<dbReference type="GO" id="GO:0004315">
    <property type="term" value="F:3-oxoacyl-[acyl-carrier-protein] synthase activity"/>
    <property type="evidence" value="ECO:0007669"/>
    <property type="project" value="InterPro"/>
</dbReference>
<dbReference type="GO" id="GO:0017000">
    <property type="term" value="P:antibiotic biosynthetic process"/>
    <property type="evidence" value="ECO:0007669"/>
    <property type="project" value="UniProtKB-KW"/>
</dbReference>
<dbReference type="GO" id="GO:0006633">
    <property type="term" value="P:fatty acid biosynthetic process"/>
    <property type="evidence" value="ECO:0007669"/>
    <property type="project" value="InterPro"/>
</dbReference>
<dbReference type="CDD" id="cd00834">
    <property type="entry name" value="KAS_I_II"/>
    <property type="match status" value="1"/>
</dbReference>
<dbReference type="FunFam" id="3.40.47.10:FF:000029">
    <property type="entry name" value="3-oxoacyl-[acyl-carrier-protein] synthase 1"/>
    <property type="match status" value="1"/>
</dbReference>
<dbReference type="FunFam" id="3.40.47.10:FF:000018">
    <property type="entry name" value="3-oxoacyl-[acyl-carrier-protein] synthase 2"/>
    <property type="match status" value="1"/>
</dbReference>
<dbReference type="Gene3D" id="3.40.47.10">
    <property type="match status" value="2"/>
</dbReference>
<dbReference type="InterPro" id="IPR000794">
    <property type="entry name" value="Beta-ketoacyl_synthase"/>
</dbReference>
<dbReference type="InterPro" id="IPR018201">
    <property type="entry name" value="Ketoacyl_synth_AS"/>
</dbReference>
<dbReference type="InterPro" id="IPR014031">
    <property type="entry name" value="Ketoacyl_synth_C"/>
</dbReference>
<dbReference type="InterPro" id="IPR014030">
    <property type="entry name" value="Ketoacyl_synth_N"/>
</dbReference>
<dbReference type="InterPro" id="IPR020841">
    <property type="entry name" value="PKS_Beta-ketoAc_synthase_dom"/>
</dbReference>
<dbReference type="InterPro" id="IPR016039">
    <property type="entry name" value="Thiolase-like"/>
</dbReference>
<dbReference type="NCBIfam" id="NF005589">
    <property type="entry name" value="PRK07314.1"/>
    <property type="match status" value="1"/>
</dbReference>
<dbReference type="PANTHER" id="PTHR11712:SF336">
    <property type="entry name" value="3-OXOACYL-[ACYL-CARRIER-PROTEIN] SYNTHASE, MITOCHONDRIAL"/>
    <property type="match status" value="1"/>
</dbReference>
<dbReference type="PANTHER" id="PTHR11712">
    <property type="entry name" value="POLYKETIDE SYNTHASE-RELATED"/>
    <property type="match status" value="1"/>
</dbReference>
<dbReference type="Pfam" id="PF00109">
    <property type="entry name" value="ketoacyl-synt"/>
    <property type="match status" value="1"/>
</dbReference>
<dbReference type="Pfam" id="PF02801">
    <property type="entry name" value="Ketoacyl-synt_C"/>
    <property type="match status" value="1"/>
</dbReference>
<dbReference type="SMART" id="SM00825">
    <property type="entry name" value="PKS_KS"/>
    <property type="match status" value="1"/>
</dbReference>
<dbReference type="SUPFAM" id="SSF53901">
    <property type="entry name" value="Thiolase-like"/>
    <property type="match status" value="2"/>
</dbReference>
<dbReference type="PROSITE" id="PS00606">
    <property type="entry name" value="KS3_1"/>
    <property type="match status" value="1"/>
</dbReference>
<dbReference type="PROSITE" id="PS52004">
    <property type="entry name" value="KS3_2"/>
    <property type="match status" value="1"/>
</dbReference>